<accession>A6QLH5</accession>
<dbReference type="EC" id="3.1.-.-"/>
<dbReference type="EMBL" id="BC147967">
    <property type="protein sequence ID" value="AAI47968.1"/>
    <property type="molecule type" value="mRNA"/>
</dbReference>
<dbReference type="RefSeq" id="NP_001106713.1">
    <property type="nucleotide sequence ID" value="NM_001113242.2"/>
</dbReference>
<dbReference type="SMR" id="A6QLH5"/>
<dbReference type="FunCoup" id="A6QLH5">
    <property type="interactions" value="2436"/>
</dbReference>
<dbReference type="STRING" id="9913.ENSBTAP00000020671"/>
<dbReference type="PaxDb" id="9913-ENSBTAP00000020671"/>
<dbReference type="GeneID" id="540516"/>
<dbReference type="KEGG" id="bta:540516"/>
<dbReference type="CTD" id="79033"/>
<dbReference type="eggNOG" id="KOG0542">
    <property type="taxonomic scope" value="Eukaryota"/>
</dbReference>
<dbReference type="HOGENOM" id="CLU_037266_0_0_1"/>
<dbReference type="InParanoid" id="A6QLH5"/>
<dbReference type="OrthoDB" id="448399at2759"/>
<dbReference type="TreeFam" id="TF313449"/>
<dbReference type="Proteomes" id="UP000009136">
    <property type="component" value="Unplaced"/>
</dbReference>
<dbReference type="GO" id="GO:0000175">
    <property type="term" value="F:3'-5'-RNA exonuclease activity"/>
    <property type="evidence" value="ECO:0007669"/>
    <property type="project" value="InterPro"/>
</dbReference>
<dbReference type="GO" id="GO:0046872">
    <property type="term" value="F:metal ion binding"/>
    <property type="evidence" value="ECO:0007669"/>
    <property type="project" value="UniProtKB-KW"/>
</dbReference>
<dbReference type="GO" id="GO:0003676">
    <property type="term" value="F:nucleic acid binding"/>
    <property type="evidence" value="ECO:0007669"/>
    <property type="project" value="InterPro"/>
</dbReference>
<dbReference type="CDD" id="cd06133">
    <property type="entry name" value="ERI-1_3'hExo_like"/>
    <property type="match status" value="1"/>
</dbReference>
<dbReference type="FunFam" id="3.30.420.10:FF:000029">
    <property type="entry name" value="ERI1 exoribonuclease 3 isoform X1"/>
    <property type="match status" value="1"/>
</dbReference>
<dbReference type="Gene3D" id="3.30.420.10">
    <property type="entry name" value="Ribonuclease H-like superfamily/Ribonuclease H"/>
    <property type="match status" value="1"/>
</dbReference>
<dbReference type="InterPro" id="IPR051274">
    <property type="entry name" value="3-5_Exoribonuclease"/>
</dbReference>
<dbReference type="InterPro" id="IPR047201">
    <property type="entry name" value="ERI-1_3'hExo-like"/>
</dbReference>
<dbReference type="InterPro" id="IPR013520">
    <property type="entry name" value="Exonuclease_RNaseT/DNA_pol3"/>
</dbReference>
<dbReference type="InterPro" id="IPR012337">
    <property type="entry name" value="RNaseH-like_sf"/>
</dbReference>
<dbReference type="InterPro" id="IPR036397">
    <property type="entry name" value="RNaseH_sf"/>
</dbReference>
<dbReference type="PANTHER" id="PTHR23044">
    <property type="entry name" value="3'-5' EXONUCLEASE ERI1-RELATED"/>
    <property type="match status" value="1"/>
</dbReference>
<dbReference type="PANTHER" id="PTHR23044:SF61">
    <property type="entry name" value="3'-5' EXORIBONUCLEASE 1-RELATED"/>
    <property type="match status" value="1"/>
</dbReference>
<dbReference type="Pfam" id="PF00929">
    <property type="entry name" value="RNase_T"/>
    <property type="match status" value="1"/>
</dbReference>
<dbReference type="SMART" id="SM00479">
    <property type="entry name" value="EXOIII"/>
    <property type="match status" value="1"/>
</dbReference>
<dbReference type="SUPFAM" id="SSF53098">
    <property type="entry name" value="Ribonuclease H-like"/>
    <property type="match status" value="1"/>
</dbReference>
<organism>
    <name type="scientific">Bos taurus</name>
    <name type="common">Bovine</name>
    <dbReference type="NCBI Taxonomy" id="9913"/>
    <lineage>
        <taxon>Eukaryota</taxon>
        <taxon>Metazoa</taxon>
        <taxon>Chordata</taxon>
        <taxon>Craniata</taxon>
        <taxon>Vertebrata</taxon>
        <taxon>Euteleostomi</taxon>
        <taxon>Mammalia</taxon>
        <taxon>Eutheria</taxon>
        <taxon>Laurasiatheria</taxon>
        <taxon>Artiodactyla</taxon>
        <taxon>Ruminantia</taxon>
        <taxon>Pecora</taxon>
        <taxon>Bovidae</taxon>
        <taxon>Bovinae</taxon>
        <taxon>Bos</taxon>
    </lineage>
</organism>
<gene>
    <name type="primary">ERI3</name>
    <name type="synonym">PINT1</name>
    <name type="synonym">PRNPIP</name>
    <name type="synonym">PRNPIP1</name>
</gene>
<evidence type="ECO:0000250" key="1"/>
<evidence type="ECO:0000255" key="2"/>
<reference key="1">
    <citation type="submission" date="2007-06" db="EMBL/GenBank/DDBJ databases">
        <authorList>
            <consortium name="NIH - Mammalian Gene Collection (MGC) project"/>
        </authorList>
    </citation>
    <scope>NUCLEOTIDE SEQUENCE [LARGE SCALE MRNA]</scope>
    <source>
        <strain>Hereford</strain>
        <tissue>Hypothalamus</tissue>
    </source>
</reference>
<feature type="chain" id="PRO_0000317625" description="ERI1 exoribonuclease 3">
    <location>
        <begin position="1"/>
        <end position="337"/>
    </location>
</feature>
<feature type="domain" description="Exonuclease">
    <location>
        <begin position="146"/>
        <end position="320"/>
    </location>
</feature>
<feature type="active site" description="Proton acceptor" evidence="2">
    <location>
        <position position="152"/>
    </location>
</feature>
<feature type="active site" description="Proton acceptor" evidence="2">
    <location>
        <position position="307"/>
    </location>
</feature>
<feature type="binding site" evidence="1">
    <location>
        <position position="150"/>
    </location>
    <ligand>
        <name>Mg(2+)</name>
        <dbReference type="ChEBI" id="CHEBI:18420"/>
        <label>1</label>
    </ligand>
</feature>
<feature type="binding site" evidence="1">
    <location>
        <position position="150"/>
    </location>
    <ligand>
        <name>Mg(2+)</name>
        <dbReference type="ChEBI" id="CHEBI:18420"/>
        <label>2</label>
    </ligand>
</feature>
<feature type="binding site" evidence="1">
    <location>
        <position position="152"/>
    </location>
    <ligand>
        <name>AMP</name>
        <dbReference type="ChEBI" id="CHEBI:456215"/>
    </ligand>
</feature>
<feature type="binding site" evidence="1">
    <location>
        <position position="152"/>
    </location>
    <ligand>
        <name>Mg(2+)</name>
        <dbReference type="ChEBI" id="CHEBI:18420"/>
        <label>1</label>
    </ligand>
</feature>
<feature type="binding site" evidence="1">
    <location>
        <position position="249"/>
    </location>
    <ligand>
        <name>Mg(2+)</name>
        <dbReference type="ChEBI" id="CHEBI:18420"/>
        <label>2</label>
    </ligand>
</feature>
<feature type="binding site" evidence="1">
    <location>
        <position position="307"/>
    </location>
    <ligand>
        <name>AMP</name>
        <dbReference type="ChEBI" id="CHEBI:456215"/>
    </ligand>
</feature>
<feature type="binding site" evidence="1">
    <location>
        <position position="312"/>
    </location>
    <ligand>
        <name>Mg(2+)</name>
        <dbReference type="ChEBI" id="CHEBI:18420"/>
        <label>1</label>
    </ligand>
</feature>
<protein>
    <recommendedName>
        <fullName>ERI1 exoribonuclease 3</fullName>
        <ecNumber>3.1.-.-</ecNumber>
    </recommendedName>
    <alternativeName>
        <fullName>Prion interactor 1</fullName>
    </alternativeName>
    <alternativeName>
        <fullName>Prion protein-interacting protein</fullName>
    </alternativeName>
</protein>
<name>ERI3_BOVIN</name>
<comment type="cofactor">
    <cofactor evidence="1">
        <name>Mg(2+)</name>
        <dbReference type="ChEBI" id="CHEBI:18420"/>
    </cofactor>
    <text evidence="1">Binds 2 magnesium ions per subunit.</text>
</comment>
<comment type="subunit">
    <text evidence="1">Interacts with PRNP.</text>
</comment>
<proteinExistence type="evidence at transcript level"/>
<sequence>MATASPAADGGRGRPWEGGLVSWPPAPPLTIPWTWMGPSWGQHPGHWGFPALTEPSASPAASLGIFEVRRVLDASGCSMLAPLQTGAARFSSYLLSRARKVLGSHLFSPCGVPEFCSISTRKLAAHSFGASMAAMMSFPPQRYHYFLVLDFEATCDKPQIHPQEIIEFPILKLNGRTMEIESTFHMYVQPVVHPQLTPFCTELTGIIQAMVDGQPSLQQVLERVDEWMAKEGLLDPNVKSIFVTCGDWDLKVMLPGQCQYLGLPVADYFKQWINLKKAYSFAMGCWPKNGLLDMNKGLSLQHIGRPHSGIDDCKNIANIMKTLAYRGFIFKQTSKPF</sequence>
<keyword id="KW-0269">Exonuclease</keyword>
<keyword id="KW-0378">Hydrolase</keyword>
<keyword id="KW-0460">Magnesium</keyword>
<keyword id="KW-0479">Metal-binding</keyword>
<keyword id="KW-0540">Nuclease</keyword>
<keyword id="KW-1185">Reference proteome</keyword>